<evidence type="ECO:0000255" key="1">
    <source>
        <dbReference type="HAMAP-Rule" id="MF_00017"/>
    </source>
</evidence>
<organism>
    <name type="scientific">Clostridium tetani (strain Massachusetts / E88)</name>
    <dbReference type="NCBI Taxonomy" id="212717"/>
    <lineage>
        <taxon>Bacteria</taxon>
        <taxon>Bacillati</taxon>
        <taxon>Bacillota</taxon>
        <taxon>Clostridia</taxon>
        <taxon>Eubacteriales</taxon>
        <taxon>Clostridiaceae</taxon>
        <taxon>Clostridium</taxon>
    </lineage>
</organism>
<proteinExistence type="inferred from homology"/>
<name>RECR_CLOTE</name>
<accession>Q899U3</accession>
<keyword id="KW-0227">DNA damage</keyword>
<keyword id="KW-0233">DNA recombination</keyword>
<keyword id="KW-0234">DNA repair</keyword>
<keyword id="KW-0479">Metal-binding</keyword>
<keyword id="KW-1185">Reference proteome</keyword>
<keyword id="KW-0862">Zinc</keyword>
<keyword id="KW-0863">Zinc-finger</keyword>
<feature type="chain" id="PRO_0000190310" description="Recombination protein RecR">
    <location>
        <begin position="1"/>
        <end position="198"/>
    </location>
</feature>
<feature type="domain" description="Toprim" evidence="1">
    <location>
        <begin position="81"/>
        <end position="175"/>
    </location>
</feature>
<feature type="zinc finger region" description="C4-type" evidence="1">
    <location>
        <begin position="58"/>
        <end position="73"/>
    </location>
</feature>
<reference key="1">
    <citation type="journal article" date="2003" name="Proc. Natl. Acad. Sci. U.S.A.">
        <title>The genome sequence of Clostridium tetani, the causative agent of tetanus disease.</title>
        <authorList>
            <person name="Brueggemann H."/>
            <person name="Baeumer S."/>
            <person name="Fricke W.F."/>
            <person name="Wiezer A."/>
            <person name="Liesegang H."/>
            <person name="Decker I."/>
            <person name="Herzberg C."/>
            <person name="Martinez-Arias R."/>
            <person name="Merkl R."/>
            <person name="Henne A."/>
            <person name="Gottschalk G."/>
        </authorList>
    </citation>
    <scope>NUCLEOTIDE SEQUENCE [LARGE SCALE GENOMIC DNA]</scope>
    <source>
        <strain>Massachusetts / E88</strain>
    </source>
</reference>
<sequence length="198" mass="21943">MEFYPIAIEKLIEEFAKLPGIGKKTAQRLTLYVLNLPREEVEEFANALIKARGTIKYCSVCGNFTDKDPCAICSNPNRDKNTICVVEHPKDIMTMEKVREYNGMYHVLHGTISPMAGRGPNDIKLKELISRINGEIKEVIVATNPNVEGEATAMYISKILKPLGAKVTRIAHGIPVGGDLEYADEVTLAKALEGRKEI</sequence>
<gene>
    <name evidence="1" type="primary">recR</name>
    <name type="ordered locus">CTC_00073</name>
</gene>
<protein>
    <recommendedName>
        <fullName evidence="1">Recombination protein RecR</fullName>
    </recommendedName>
</protein>
<comment type="function">
    <text evidence="1">May play a role in DNA repair. It seems to be involved in an RecBC-independent recombinational process of DNA repair. It may act with RecF and RecO.</text>
</comment>
<comment type="similarity">
    <text evidence="1">Belongs to the RecR family.</text>
</comment>
<dbReference type="EMBL" id="AE015927">
    <property type="protein sequence ID" value="AAO34728.1"/>
    <property type="molecule type" value="Genomic_DNA"/>
</dbReference>
<dbReference type="RefSeq" id="WP_011098401.1">
    <property type="nucleotide sequence ID" value="NC_004557.1"/>
</dbReference>
<dbReference type="SMR" id="Q899U3"/>
<dbReference type="STRING" id="212717.CTC_00073"/>
<dbReference type="GeneID" id="24252985"/>
<dbReference type="KEGG" id="ctc:CTC_00073"/>
<dbReference type="HOGENOM" id="CLU_060739_1_0_9"/>
<dbReference type="OrthoDB" id="9802672at2"/>
<dbReference type="Proteomes" id="UP000001412">
    <property type="component" value="Chromosome"/>
</dbReference>
<dbReference type="GO" id="GO:0003677">
    <property type="term" value="F:DNA binding"/>
    <property type="evidence" value="ECO:0007669"/>
    <property type="project" value="UniProtKB-UniRule"/>
</dbReference>
<dbReference type="GO" id="GO:0008270">
    <property type="term" value="F:zinc ion binding"/>
    <property type="evidence" value="ECO:0007669"/>
    <property type="project" value="UniProtKB-KW"/>
</dbReference>
<dbReference type="GO" id="GO:0006310">
    <property type="term" value="P:DNA recombination"/>
    <property type="evidence" value="ECO:0007669"/>
    <property type="project" value="UniProtKB-UniRule"/>
</dbReference>
<dbReference type="GO" id="GO:0006281">
    <property type="term" value="P:DNA repair"/>
    <property type="evidence" value="ECO:0007669"/>
    <property type="project" value="UniProtKB-UniRule"/>
</dbReference>
<dbReference type="CDD" id="cd01025">
    <property type="entry name" value="TOPRIM_recR"/>
    <property type="match status" value="1"/>
</dbReference>
<dbReference type="Gene3D" id="3.30.60.80">
    <property type="match status" value="1"/>
</dbReference>
<dbReference type="Gene3D" id="3.40.1360.10">
    <property type="match status" value="1"/>
</dbReference>
<dbReference type="Gene3D" id="6.10.250.240">
    <property type="match status" value="1"/>
</dbReference>
<dbReference type="Gene3D" id="1.10.8.420">
    <property type="entry name" value="RecR Domain 1"/>
    <property type="match status" value="1"/>
</dbReference>
<dbReference type="HAMAP" id="MF_00017">
    <property type="entry name" value="RecR"/>
    <property type="match status" value="1"/>
</dbReference>
<dbReference type="InterPro" id="IPR000093">
    <property type="entry name" value="DNA_Rcmb_RecR"/>
</dbReference>
<dbReference type="InterPro" id="IPR023627">
    <property type="entry name" value="Rcmb_RecR"/>
</dbReference>
<dbReference type="InterPro" id="IPR015967">
    <property type="entry name" value="Rcmb_RecR_Znf"/>
</dbReference>
<dbReference type="InterPro" id="IPR006171">
    <property type="entry name" value="TOPRIM_dom"/>
</dbReference>
<dbReference type="InterPro" id="IPR034137">
    <property type="entry name" value="TOPRIM_RecR"/>
</dbReference>
<dbReference type="NCBIfam" id="TIGR00615">
    <property type="entry name" value="recR"/>
    <property type="match status" value="1"/>
</dbReference>
<dbReference type="PANTHER" id="PTHR30446">
    <property type="entry name" value="RECOMBINATION PROTEIN RECR"/>
    <property type="match status" value="1"/>
</dbReference>
<dbReference type="PANTHER" id="PTHR30446:SF0">
    <property type="entry name" value="RECOMBINATION PROTEIN RECR"/>
    <property type="match status" value="1"/>
</dbReference>
<dbReference type="Pfam" id="PF21175">
    <property type="entry name" value="RecR_C"/>
    <property type="match status" value="1"/>
</dbReference>
<dbReference type="Pfam" id="PF21176">
    <property type="entry name" value="RecR_HhH"/>
    <property type="match status" value="1"/>
</dbReference>
<dbReference type="Pfam" id="PF02132">
    <property type="entry name" value="RecR_ZnF"/>
    <property type="match status" value="1"/>
</dbReference>
<dbReference type="Pfam" id="PF13662">
    <property type="entry name" value="Toprim_4"/>
    <property type="match status" value="1"/>
</dbReference>
<dbReference type="SMART" id="SM00493">
    <property type="entry name" value="TOPRIM"/>
    <property type="match status" value="1"/>
</dbReference>
<dbReference type="SUPFAM" id="SSF111304">
    <property type="entry name" value="Recombination protein RecR"/>
    <property type="match status" value="1"/>
</dbReference>
<dbReference type="PROSITE" id="PS01300">
    <property type="entry name" value="RECR"/>
    <property type="match status" value="1"/>
</dbReference>
<dbReference type="PROSITE" id="PS50880">
    <property type="entry name" value="TOPRIM"/>
    <property type="match status" value="1"/>
</dbReference>